<accession>Q5HYJ3</accession>
<accession>B2R9C2</accession>
<accession>Q6PIU3</accession>
<accession>Q8TC53</accession>
<keyword id="KW-0007">Acetylation</keyword>
<keyword id="KW-0025">Alternative splicing</keyword>
<keyword id="KW-0175">Coiled coil</keyword>
<keyword id="KW-0539">Nucleus</keyword>
<keyword id="KW-0597">Phosphoprotein</keyword>
<keyword id="KW-1267">Proteomics identification</keyword>
<keyword id="KW-1185">Reference proteome</keyword>
<keyword id="KW-0694">RNA-binding</keyword>
<protein>
    <recommendedName>
        <fullName>Protein FAM76B</fullName>
    </recommendedName>
</protein>
<evidence type="ECO:0000250" key="1">
    <source>
        <dbReference type="UniProtKB" id="Q80XP8"/>
    </source>
</evidence>
<evidence type="ECO:0000255" key="2"/>
<evidence type="ECO:0000256" key="3">
    <source>
        <dbReference type="SAM" id="MobiDB-lite"/>
    </source>
</evidence>
<evidence type="ECO:0000269" key="4">
    <source>
    </source>
</evidence>
<evidence type="ECO:0000269" key="5">
    <source>
    </source>
</evidence>
<evidence type="ECO:0000269" key="6">
    <source>
    </source>
</evidence>
<evidence type="ECO:0000269" key="7">
    <source>
    </source>
</evidence>
<evidence type="ECO:0000303" key="8">
    <source>
    </source>
</evidence>
<evidence type="ECO:0000303" key="9">
    <source>
    </source>
</evidence>
<evidence type="ECO:0000305" key="10"/>
<evidence type="ECO:0007744" key="11">
    <source>
    </source>
</evidence>
<evidence type="ECO:0007744" key="12">
    <source>
    </source>
</evidence>
<evidence type="ECO:0007744" key="13">
    <source>
    </source>
</evidence>
<evidence type="ECO:0007744" key="14">
    <source>
    </source>
</evidence>
<evidence type="ECO:0007744" key="15">
    <source>
    </source>
</evidence>
<evidence type="ECO:0007744" key="16">
    <source>
    </source>
</evidence>
<evidence type="ECO:0007744" key="17">
    <source>
    </source>
</evidence>
<evidence type="ECO:0007744" key="18">
    <source>
    </source>
</evidence>
<evidence type="ECO:0007744" key="19">
    <source>
    </source>
</evidence>
<evidence type="ECO:0007744" key="20">
    <source>
    </source>
</evidence>
<name>FA76B_HUMAN</name>
<gene>
    <name type="primary">FAM76B</name>
</gene>
<organism>
    <name type="scientific">Homo sapiens</name>
    <name type="common">Human</name>
    <dbReference type="NCBI Taxonomy" id="9606"/>
    <lineage>
        <taxon>Eukaryota</taxon>
        <taxon>Metazoa</taxon>
        <taxon>Chordata</taxon>
        <taxon>Craniata</taxon>
        <taxon>Vertebrata</taxon>
        <taxon>Euteleostomi</taxon>
        <taxon>Mammalia</taxon>
        <taxon>Eutheria</taxon>
        <taxon>Euarchontoglires</taxon>
        <taxon>Primates</taxon>
        <taxon>Haplorrhini</taxon>
        <taxon>Catarrhini</taxon>
        <taxon>Hominidae</taxon>
        <taxon>Homo</taxon>
    </lineage>
</organism>
<sequence>MAASALYACTKCTQRYPFEELSQGQQLCKECRIAHPIVKCTYCRSEFQQESKTNTICKKCAQNVKQFGTPKPCQYCNIIAAFIGTKCQRCTNSEKKYGPPQTCEQCKQQCAFDRKEEGRRKVDGKLLCWLCTLSYKRVLQKTKEQRKSLGSSHSNSSSSSLTEKDQHHPKHHHHHHHHHHRHSSSHHKISNLSPEEEQGLWKQSHKSSATIQNETPKKKPKLESKPSNGDSSSINQSADSGGTDNFVLISQLKEEVMSLKRLLQQRDQTILEKDKKLTELKADFQYQESNLRTKMNSMEKAHKETVEQLQAKNRELLKQVAALSKGKKFDKSGSILTSP</sequence>
<comment type="function">
    <text evidence="6 7">Negatively regulates the NF-kappa-B-mediated inflammatory pathway by preventing the translocation of HNRNPA2B1 from the nucleus to the cytoplasm (PubMed:37643469). Inhibits the PI3K/Akt/NF-kappa-B pathway-mediated polarization of M1 macrophages by binding to and stabilizing PIK3CD mRNA, resulting in increased levels of PIK3CD protein and increased levels of phosphorylated downstream target AKT which leads to decreased NF-kappa-B signaling (PubMed:38421448).</text>
</comment>
<comment type="subunit">
    <text evidence="6">Interacts with HNRNPA2B1 (via C-terminus); the interaction results in retention of HNRNPA2B1 in the nucleus and inhibition of the NF-kappa-B-mediated inflammatory pathway.</text>
</comment>
<comment type="interaction">
    <interactant intactId="EBI-751192">
        <id>Q5HYJ3</id>
    </interactant>
    <interactant intactId="EBI-11102284">
        <id>Q96SZ5</id>
        <label>ADO</label>
    </interactant>
    <organismsDiffer>false</organismsDiffer>
    <experiments>2</experiments>
</comment>
<comment type="interaction">
    <interactant intactId="EBI-751192">
        <id>Q5HYJ3</id>
    </interactant>
    <interactant intactId="EBI-10217483">
        <id>P60412</id>
        <label>KRTAP10-11</label>
    </interactant>
    <organismsDiffer>false</organismsDiffer>
    <experiments>3</experiments>
</comment>
<comment type="interaction">
    <interactant intactId="EBI-751192">
        <id>Q5HYJ3</id>
    </interactant>
    <interactant intactId="EBI-10172150">
        <id>P60370</id>
        <label>KRTAP10-5</label>
    </interactant>
    <organismsDiffer>false</organismsDiffer>
    <experiments>5</experiments>
</comment>
<comment type="interaction">
    <interactant intactId="EBI-751192">
        <id>Q5HYJ3</id>
    </interactant>
    <interactant intactId="EBI-10172290">
        <id>P60409</id>
        <label>KRTAP10-7</label>
    </interactant>
    <organismsDiffer>false</organismsDiffer>
    <experiments>3</experiments>
</comment>
<comment type="interaction">
    <interactant intactId="EBI-751192">
        <id>Q5HYJ3</id>
    </interactant>
    <interactant intactId="EBI-10171774">
        <id>P60410</id>
        <label>KRTAP10-8</label>
    </interactant>
    <organismsDiffer>false</organismsDiffer>
    <experiments>3</experiments>
</comment>
<comment type="interaction">
    <interactant intactId="EBI-751192">
        <id>Q5HYJ3</id>
    </interactant>
    <interactant intactId="EBI-10172052">
        <id>P60411</id>
        <label>KRTAP10-9</label>
    </interactant>
    <organismsDiffer>false</organismsDiffer>
    <experiments>3</experiments>
</comment>
<comment type="interaction">
    <interactant intactId="EBI-751192">
        <id>Q5HYJ3</id>
    </interactant>
    <interactant intactId="EBI-10302547">
        <id>Q9BYR0</id>
        <label>KRTAP4-7</label>
    </interactant>
    <organismsDiffer>false</organismsDiffer>
    <experiments>3</experiments>
</comment>
<comment type="interaction">
    <interactant intactId="EBI-751192">
        <id>Q5HYJ3</id>
    </interactant>
    <interactant intactId="EBI-3958099">
        <id>P26371</id>
        <label>KRTAP5-9</label>
    </interactant>
    <organismsDiffer>false</organismsDiffer>
    <experiments>3</experiments>
</comment>
<comment type="interaction">
    <interactant intactId="EBI-751192">
        <id>Q5HYJ3</id>
    </interactant>
    <interactant intactId="EBI-1044640">
        <id>Q9BYQ4</id>
        <label>KRTAP9-2</label>
    </interactant>
    <organismsDiffer>false</organismsDiffer>
    <experiments>3</experiments>
</comment>
<comment type="interaction">
    <interactant intactId="EBI-11956087">
        <id>Q5HYJ3-3</id>
    </interactant>
    <interactant intactId="EBI-10253274">
        <id>Q6P9H4</id>
        <label>CNKSR3</label>
    </interactant>
    <organismsDiffer>false</organismsDiffer>
    <experiments>3</experiments>
</comment>
<comment type="interaction">
    <interactant intactId="EBI-11956087">
        <id>Q5HYJ3-3</id>
    </interactant>
    <interactant intactId="EBI-15639515">
        <id>O15354</id>
        <label>GPR37</label>
    </interactant>
    <organismsDiffer>false</organismsDiffer>
    <experiments>3</experiments>
</comment>
<comment type="interaction">
    <interactant intactId="EBI-11956087">
        <id>Q5HYJ3-3</id>
    </interactant>
    <interactant intactId="EBI-747754">
        <id>P28799</id>
        <label>GRN</label>
    </interactant>
    <organismsDiffer>false</organismsDiffer>
    <experiments>6</experiments>
</comment>
<comment type="interaction">
    <interactant intactId="EBI-11956087">
        <id>Q5HYJ3-3</id>
    </interactant>
    <interactant intactId="EBI-25860013">
        <id>P28799-2</id>
        <label>GRN</label>
    </interactant>
    <organismsDiffer>false</organismsDiffer>
    <experiments>3</experiments>
</comment>
<comment type="interaction">
    <interactant intactId="EBI-11956087">
        <id>Q5HYJ3-3</id>
    </interactant>
    <interactant intactId="EBI-466029">
        <id>P42858</id>
        <label>HTT</label>
    </interactant>
    <organismsDiffer>false</organismsDiffer>
    <experiments>6</experiments>
</comment>
<comment type="interaction">
    <interactant intactId="EBI-11956087">
        <id>Q5HYJ3-3</id>
    </interactant>
    <interactant intactId="EBI-11959885">
        <id>Q07627</id>
        <label>KRTAP1-1</label>
    </interactant>
    <organismsDiffer>false</organismsDiffer>
    <experiments>3</experiments>
</comment>
<comment type="interaction">
    <interactant intactId="EBI-11956087">
        <id>Q5HYJ3-3</id>
    </interactant>
    <interactant intactId="EBI-10217483">
        <id>P60412</id>
        <label>KRTAP10-11</label>
    </interactant>
    <organismsDiffer>false</organismsDiffer>
    <experiments>3</experiments>
</comment>
<comment type="interaction">
    <interactant intactId="EBI-11956087">
        <id>Q5HYJ3-3</id>
    </interactant>
    <interactant intactId="EBI-10172150">
        <id>P60370</id>
        <label>KRTAP10-5</label>
    </interactant>
    <organismsDiffer>false</organismsDiffer>
    <experiments>3</experiments>
</comment>
<comment type="interaction">
    <interactant intactId="EBI-11956087">
        <id>Q5HYJ3-3</id>
    </interactant>
    <interactant intactId="EBI-10171774">
        <id>P60410</id>
        <label>KRTAP10-8</label>
    </interactant>
    <organismsDiffer>false</organismsDiffer>
    <experiments>3</experiments>
</comment>
<comment type="interaction">
    <interactant intactId="EBI-11956087">
        <id>Q5HYJ3-3</id>
    </interactant>
    <interactant intactId="EBI-10172052">
        <id>P60411</id>
        <label>KRTAP10-9</label>
    </interactant>
    <organismsDiffer>false</organismsDiffer>
    <experiments>3</experiments>
</comment>
<comment type="interaction">
    <interactant intactId="EBI-11956087">
        <id>Q5HYJ3-3</id>
    </interactant>
    <interactant intactId="EBI-10302392">
        <id>Q9BYQ6</id>
        <label>KRTAP4-11</label>
    </interactant>
    <organismsDiffer>false</organismsDiffer>
    <experiments>3</experiments>
</comment>
<comment type="interaction">
    <interactant intactId="EBI-11956087">
        <id>Q5HYJ3-3</id>
    </interactant>
    <interactant intactId="EBI-11993254">
        <id>Q9BYR2</id>
        <label>KRTAP4-5</label>
    </interactant>
    <organismsDiffer>false</organismsDiffer>
    <experiments>3</experiments>
</comment>
<comment type="interaction">
    <interactant intactId="EBI-11956087">
        <id>Q5HYJ3-3</id>
    </interactant>
    <interactant intactId="EBI-11993296">
        <id>Q6L8G4</id>
        <label>KRTAP5-11</label>
    </interactant>
    <organismsDiffer>false</organismsDiffer>
    <experiments>3</experiments>
</comment>
<comment type="interaction">
    <interactant intactId="EBI-11956087">
        <id>Q5HYJ3-3</id>
    </interactant>
    <interactant intactId="EBI-11958178">
        <id>Q701N4</id>
        <label>KRTAP5-2</label>
    </interactant>
    <organismsDiffer>false</organismsDiffer>
    <experiments>3</experiments>
</comment>
<comment type="interaction">
    <interactant intactId="EBI-11956087">
        <id>Q5HYJ3-3</id>
    </interactant>
    <interactant intactId="EBI-3958099">
        <id>P26371</id>
        <label>KRTAP5-9</label>
    </interactant>
    <organismsDiffer>false</organismsDiffer>
    <experiments>3</experiments>
</comment>
<comment type="interaction">
    <interactant intactId="EBI-11956087">
        <id>Q5HYJ3-3</id>
    </interactant>
    <interactant intactId="EBI-1044640">
        <id>Q9BYQ4</id>
        <label>KRTAP9-2</label>
    </interactant>
    <organismsDiffer>false</organismsDiffer>
    <experiments>3</experiments>
</comment>
<comment type="interaction">
    <interactant intactId="EBI-11956087">
        <id>Q5HYJ3-3</id>
    </interactant>
    <interactant intactId="EBI-720609">
        <id>O76024</id>
        <label>WFS1</label>
    </interactant>
    <organismsDiffer>false</organismsDiffer>
    <experiments>3</experiments>
</comment>
<comment type="subcellular location">
    <subcellularLocation>
        <location evidence="4 5">Nucleus speckle</location>
    </subcellularLocation>
</comment>
<comment type="alternative products">
    <event type="alternative splicing"/>
    <isoform>
        <id>Q5HYJ3-1</id>
        <name>1</name>
        <sequence type="displayed"/>
    </isoform>
    <isoform>
        <id>Q5HYJ3-2</id>
        <name>2</name>
        <sequence type="described" ref="VSP_022679 VSP_022680"/>
    </isoform>
    <isoform>
        <id>Q5HYJ3-3</id>
        <name>3</name>
        <sequence type="described" ref="VSP_057354"/>
    </isoform>
</comment>
<comment type="domain">
    <text evidence="4">The basic polyhistidine region acts as a targeting signal to nuclear speckles.</text>
</comment>
<comment type="similarity">
    <text evidence="10">Belongs to the FAM76 family.</text>
</comment>
<proteinExistence type="evidence at protein level"/>
<reference key="1">
    <citation type="journal article" date="2004" name="Nat. Genet.">
        <title>Complete sequencing and characterization of 21,243 full-length human cDNAs.</title>
        <authorList>
            <person name="Ota T."/>
            <person name="Suzuki Y."/>
            <person name="Nishikawa T."/>
            <person name="Otsuki T."/>
            <person name="Sugiyama T."/>
            <person name="Irie R."/>
            <person name="Wakamatsu A."/>
            <person name="Hayashi K."/>
            <person name="Sato H."/>
            <person name="Nagai K."/>
            <person name="Kimura K."/>
            <person name="Makita H."/>
            <person name="Sekine M."/>
            <person name="Obayashi M."/>
            <person name="Nishi T."/>
            <person name="Shibahara T."/>
            <person name="Tanaka T."/>
            <person name="Ishii S."/>
            <person name="Yamamoto J."/>
            <person name="Saito K."/>
            <person name="Kawai Y."/>
            <person name="Isono Y."/>
            <person name="Nakamura Y."/>
            <person name="Nagahari K."/>
            <person name="Murakami K."/>
            <person name="Yasuda T."/>
            <person name="Iwayanagi T."/>
            <person name="Wagatsuma M."/>
            <person name="Shiratori A."/>
            <person name="Sudo H."/>
            <person name="Hosoiri T."/>
            <person name="Kaku Y."/>
            <person name="Kodaira H."/>
            <person name="Kondo H."/>
            <person name="Sugawara M."/>
            <person name="Takahashi M."/>
            <person name="Kanda K."/>
            <person name="Yokoi T."/>
            <person name="Furuya T."/>
            <person name="Kikkawa E."/>
            <person name="Omura Y."/>
            <person name="Abe K."/>
            <person name="Kamihara K."/>
            <person name="Katsuta N."/>
            <person name="Sato K."/>
            <person name="Tanikawa M."/>
            <person name="Yamazaki M."/>
            <person name="Ninomiya K."/>
            <person name="Ishibashi T."/>
            <person name="Yamashita H."/>
            <person name="Murakawa K."/>
            <person name="Fujimori K."/>
            <person name="Tanai H."/>
            <person name="Kimata M."/>
            <person name="Watanabe M."/>
            <person name="Hiraoka S."/>
            <person name="Chiba Y."/>
            <person name="Ishida S."/>
            <person name="Ono Y."/>
            <person name="Takiguchi S."/>
            <person name="Watanabe S."/>
            <person name="Yosida M."/>
            <person name="Hotuta T."/>
            <person name="Kusano J."/>
            <person name="Kanehori K."/>
            <person name="Takahashi-Fujii A."/>
            <person name="Hara H."/>
            <person name="Tanase T.-O."/>
            <person name="Nomura Y."/>
            <person name="Togiya S."/>
            <person name="Komai F."/>
            <person name="Hara R."/>
            <person name="Takeuchi K."/>
            <person name="Arita M."/>
            <person name="Imose N."/>
            <person name="Musashino K."/>
            <person name="Yuuki H."/>
            <person name="Oshima A."/>
            <person name="Sasaki N."/>
            <person name="Aotsuka S."/>
            <person name="Yoshikawa Y."/>
            <person name="Matsunawa H."/>
            <person name="Ichihara T."/>
            <person name="Shiohata N."/>
            <person name="Sano S."/>
            <person name="Moriya S."/>
            <person name="Momiyama H."/>
            <person name="Satoh N."/>
            <person name="Takami S."/>
            <person name="Terashima Y."/>
            <person name="Suzuki O."/>
            <person name="Nakagawa S."/>
            <person name="Senoh A."/>
            <person name="Mizoguchi H."/>
            <person name="Goto Y."/>
            <person name="Shimizu F."/>
            <person name="Wakebe H."/>
            <person name="Hishigaki H."/>
            <person name="Watanabe T."/>
            <person name="Sugiyama A."/>
            <person name="Takemoto M."/>
            <person name="Kawakami B."/>
            <person name="Yamazaki M."/>
            <person name="Watanabe K."/>
            <person name="Kumagai A."/>
            <person name="Itakura S."/>
            <person name="Fukuzumi Y."/>
            <person name="Fujimori Y."/>
            <person name="Komiyama M."/>
            <person name="Tashiro H."/>
            <person name="Tanigami A."/>
            <person name="Fujiwara T."/>
            <person name="Ono T."/>
            <person name="Yamada K."/>
            <person name="Fujii Y."/>
            <person name="Ozaki K."/>
            <person name="Hirao M."/>
            <person name="Ohmori Y."/>
            <person name="Kawabata A."/>
            <person name="Hikiji T."/>
            <person name="Kobatake N."/>
            <person name="Inagaki H."/>
            <person name="Ikema Y."/>
            <person name="Okamoto S."/>
            <person name="Okitani R."/>
            <person name="Kawakami T."/>
            <person name="Noguchi S."/>
            <person name="Itoh T."/>
            <person name="Shigeta K."/>
            <person name="Senba T."/>
            <person name="Matsumura K."/>
            <person name="Nakajima Y."/>
            <person name="Mizuno T."/>
            <person name="Morinaga M."/>
            <person name="Sasaki M."/>
            <person name="Togashi T."/>
            <person name="Oyama M."/>
            <person name="Hata H."/>
            <person name="Watanabe M."/>
            <person name="Komatsu T."/>
            <person name="Mizushima-Sugano J."/>
            <person name="Satoh T."/>
            <person name="Shirai Y."/>
            <person name="Takahashi Y."/>
            <person name="Nakagawa K."/>
            <person name="Okumura K."/>
            <person name="Nagase T."/>
            <person name="Nomura N."/>
            <person name="Kikuchi H."/>
            <person name="Masuho Y."/>
            <person name="Yamashita R."/>
            <person name="Nakai K."/>
            <person name="Yada T."/>
            <person name="Nakamura Y."/>
            <person name="Ohara O."/>
            <person name="Isogai T."/>
            <person name="Sugano S."/>
        </authorList>
    </citation>
    <scope>NUCLEOTIDE SEQUENCE [LARGE SCALE MRNA] (ISOFORM 3)</scope>
    <source>
        <tissue>Brain</tissue>
    </source>
</reference>
<reference key="2">
    <citation type="journal article" date="2007" name="BMC Genomics">
        <title>The full-ORF clone resource of the German cDNA consortium.</title>
        <authorList>
            <person name="Bechtel S."/>
            <person name="Rosenfelder H."/>
            <person name="Duda A."/>
            <person name="Schmidt C.P."/>
            <person name="Ernst U."/>
            <person name="Wellenreuther R."/>
            <person name="Mehrle A."/>
            <person name="Schuster C."/>
            <person name="Bahr A."/>
            <person name="Bloecker H."/>
            <person name="Heubner D."/>
            <person name="Hoerlein A."/>
            <person name="Michel G."/>
            <person name="Wedler H."/>
            <person name="Koehrer K."/>
            <person name="Ottenwaelder B."/>
            <person name="Poustka A."/>
            <person name="Wiemann S."/>
            <person name="Schupp I."/>
        </authorList>
    </citation>
    <scope>NUCLEOTIDE SEQUENCE [LARGE SCALE MRNA] (ISOFORM 1)</scope>
    <source>
        <tissue>Fetal skin</tissue>
    </source>
</reference>
<reference key="3">
    <citation type="journal article" date="2006" name="Nature">
        <title>Human chromosome 11 DNA sequence and analysis including novel gene identification.</title>
        <authorList>
            <person name="Taylor T.D."/>
            <person name="Noguchi H."/>
            <person name="Totoki Y."/>
            <person name="Toyoda A."/>
            <person name="Kuroki Y."/>
            <person name="Dewar K."/>
            <person name="Lloyd C."/>
            <person name="Itoh T."/>
            <person name="Takeda T."/>
            <person name="Kim D.-W."/>
            <person name="She X."/>
            <person name="Barlow K.F."/>
            <person name="Bloom T."/>
            <person name="Bruford E."/>
            <person name="Chang J.L."/>
            <person name="Cuomo C.A."/>
            <person name="Eichler E."/>
            <person name="FitzGerald M.G."/>
            <person name="Jaffe D.B."/>
            <person name="LaButti K."/>
            <person name="Nicol R."/>
            <person name="Park H.-S."/>
            <person name="Seaman C."/>
            <person name="Sougnez C."/>
            <person name="Yang X."/>
            <person name="Zimmer A.R."/>
            <person name="Zody M.C."/>
            <person name="Birren B.W."/>
            <person name="Nusbaum C."/>
            <person name="Fujiyama A."/>
            <person name="Hattori M."/>
            <person name="Rogers J."/>
            <person name="Lander E.S."/>
            <person name="Sakaki Y."/>
        </authorList>
    </citation>
    <scope>NUCLEOTIDE SEQUENCE [LARGE SCALE GENOMIC DNA]</scope>
</reference>
<reference key="4">
    <citation type="submission" date="2005-07" db="EMBL/GenBank/DDBJ databases">
        <authorList>
            <person name="Mural R.J."/>
            <person name="Istrail S."/>
            <person name="Sutton G."/>
            <person name="Florea L."/>
            <person name="Halpern A.L."/>
            <person name="Mobarry C.M."/>
            <person name="Lippert R."/>
            <person name="Walenz B."/>
            <person name="Shatkay H."/>
            <person name="Dew I."/>
            <person name="Miller J.R."/>
            <person name="Flanigan M.J."/>
            <person name="Edwards N.J."/>
            <person name="Bolanos R."/>
            <person name="Fasulo D."/>
            <person name="Halldorsson B.V."/>
            <person name="Hannenhalli S."/>
            <person name="Turner R."/>
            <person name="Yooseph S."/>
            <person name="Lu F."/>
            <person name="Nusskern D.R."/>
            <person name="Shue B.C."/>
            <person name="Zheng X.H."/>
            <person name="Zhong F."/>
            <person name="Delcher A.L."/>
            <person name="Huson D.H."/>
            <person name="Kravitz S.A."/>
            <person name="Mouchard L."/>
            <person name="Reinert K."/>
            <person name="Remington K.A."/>
            <person name="Clark A.G."/>
            <person name="Waterman M.S."/>
            <person name="Eichler E.E."/>
            <person name="Adams M.D."/>
            <person name="Hunkapiller M.W."/>
            <person name="Myers E.W."/>
            <person name="Venter J.C."/>
        </authorList>
    </citation>
    <scope>NUCLEOTIDE SEQUENCE [LARGE SCALE GENOMIC DNA]</scope>
</reference>
<reference key="5">
    <citation type="journal article" date="2004" name="Genome Res.">
        <title>The status, quality, and expansion of the NIH full-length cDNA project: the Mammalian Gene Collection (MGC).</title>
        <authorList>
            <consortium name="The MGC Project Team"/>
        </authorList>
    </citation>
    <scope>NUCLEOTIDE SEQUENCE [LARGE SCALE MRNA] (ISOFORM 2)</scope>
    <source>
        <tissue>Testis</tissue>
    </source>
</reference>
<reference key="6">
    <citation type="journal article" date="2006" name="Cell">
        <title>Global, in vivo, and site-specific phosphorylation dynamics in signaling networks.</title>
        <authorList>
            <person name="Olsen J.V."/>
            <person name="Blagoev B."/>
            <person name="Gnad F."/>
            <person name="Macek B."/>
            <person name="Kumar C."/>
            <person name="Mortensen P."/>
            <person name="Mann M."/>
        </authorList>
    </citation>
    <scope>PHOSPHORYLATION [LARGE SCALE ANALYSIS] AT SER-193</scope>
    <scope>IDENTIFICATION BY MASS SPECTROMETRY [LARGE SCALE ANALYSIS]</scope>
    <source>
        <tissue>Cervix carcinoma</tissue>
    </source>
</reference>
<reference key="7">
    <citation type="journal article" date="2007" name="Science">
        <title>ATM and ATR substrate analysis reveals extensive protein networks responsive to DNA damage.</title>
        <authorList>
            <person name="Matsuoka S."/>
            <person name="Ballif B.A."/>
            <person name="Smogorzewska A."/>
            <person name="McDonald E.R. III"/>
            <person name="Hurov K.E."/>
            <person name="Luo J."/>
            <person name="Bakalarski C.E."/>
            <person name="Zhao Z."/>
            <person name="Solimini N."/>
            <person name="Lerenthal Y."/>
            <person name="Shiloh Y."/>
            <person name="Gygi S.P."/>
            <person name="Elledge S.J."/>
        </authorList>
    </citation>
    <scope>PHOSPHORYLATION [LARGE SCALE ANALYSIS] AT SER-22</scope>
    <scope>IDENTIFICATION BY MASS SPECTROMETRY [LARGE SCALE ANALYSIS]</scope>
    <source>
        <tissue>Embryonic kidney</tissue>
    </source>
</reference>
<reference key="8">
    <citation type="journal article" date="2008" name="Proc. Natl. Acad. Sci. U.S.A.">
        <title>A quantitative atlas of mitotic phosphorylation.</title>
        <authorList>
            <person name="Dephoure N."/>
            <person name="Zhou C."/>
            <person name="Villen J."/>
            <person name="Beausoleil S.A."/>
            <person name="Bakalarski C.E."/>
            <person name="Elledge S.J."/>
            <person name="Gygi S.P."/>
        </authorList>
    </citation>
    <scope>PHOSPHORYLATION [LARGE SCALE ANALYSIS] AT SER-193</scope>
    <scope>IDENTIFICATION BY MASS SPECTROMETRY [LARGE SCALE ANALYSIS]</scope>
    <source>
        <tissue>Cervix carcinoma</tissue>
    </source>
</reference>
<reference key="9">
    <citation type="journal article" date="2009" name="Anal. Chem.">
        <title>Lys-N and trypsin cover complementary parts of the phosphoproteome in a refined SCX-based approach.</title>
        <authorList>
            <person name="Gauci S."/>
            <person name="Helbig A.O."/>
            <person name="Slijper M."/>
            <person name="Krijgsveld J."/>
            <person name="Heck A.J."/>
            <person name="Mohammed S."/>
        </authorList>
    </citation>
    <scope>ACETYLATION [LARGE SCALE ANALYSIS] AT ALA-2</scope>
    <scope>CLEAVAGE OF INITIATOR METHIONINE [LARGE SCALE ANALYSIS]</scope>
    <scope>IDENTIFICATION BY MASS SPECTROMETRY [LARGE SCALE ANALYSIS]</scope>
</reference>
<reference key="10">
    <citation type="journal article" date="2009" name="PLoS Genet.">
        <title>Genome-wide analysis of histidine repeats reveals their role in the localization of human proteins to the nuclear speckles compartment.</title>
        <authorList>
            <person name="Salichs E."/>
            <person name="Ledda A."/>
            <person name="Mularoni L."/>
            <person name="Alba M.M."/>
            <person name="de la Luna S."/>
        </authorList>
    </citation>
    <scope>SUBCELLULAR LOCATION</scope>
</reference>
<reference key="11">
    <citation type="journal article" date="2009" name="Sci. Signal.">
        <title>Quantitative phosphoproteomic analysis of T cell receptor signaling reveals system-wide modulation of protein-protein interactions.</title>
        <authorList>
            <person name="Mayya V."/>
            <person name="Lundgren D.H."/>
            <person name="Hwang S.-I."/>
            <person name="Rezaul K."/>
            <person name="Wu L."/>
            <person name="Eng J.K."/>
            <person name="Rodionov V."/>
            <person name="Han D.K."/>
        </authorList>
    </citation>
    <scope>PHOSPHORYLATION [LARGE SCALE ANALYSIS] AT SER-193</scope>
    <scope>IDENTIFICATION BY MASS SPECTROMETRY [LARGE SCALE ANALYSIS]</scope>
    <source>
        <tissue>Leukemic T-cell</tissue>
    </source>
</reference>
<reference key="12">
    <citation type="journal article" date="2010" name="Sci. Signal.">
        <title>Quantitative phosphoproteomics reveals widespread full phosphorylation site occupancy during mitosis.</title>
        <authorList>
            <person name="Olsen J.V."/>
            <person name="Vermeulen M."/>
            <person name="Santamaria A."/>
            <person name="Kumar C."/>
            <person name="Miller M.L."/>
            <person name="Jensen L.J."/>
            <person name="Gnad F."/>
            <person name="Cox J."/>
            <person name="Jensen T.S."/>
            <person name="Nigg E.A."/>
            <person name="Brunak S."/>
            <person name="Mann M."/>
        </authorList>
    </citation>
    <scope>PHOSPHORYLATION [LARGE SCALE ANALYSIS] AT SER-148 AND SER-193</scope>
    <scope>IDENTIFICATION BY MASS SPECTROMETRY [LARGE SCALE ANALYSIS]</scope>
    <source>
        <tissue>Cervix carcinoma</tissue>
    </source>
</reference>
<reference key="13">
    <citation type="journal article" date="2011" name="BMC Syst. Biol.">
        <title>Initial characterization of the human central proteome.</title>
        <authorList>
            <person name="Burkard T.R."/>
            <person name="Planyavsky M."/>
            <person name="Kaupe I."/>
            <person name="Breitwieser F.P."/>
            <person name="Buerckstuemmer T."/>
            <person name="Bennett K.L."/>
            <person name="Superti-Furga G."/>
            <person name="Colinge J."/>
        </authorList>
    </citation>
    <scope>IDENTIFICATION BY MASS SPECTROMETRY [LARGE SCALE ANALYSIS]</scope>
</reference>
<reference key="14">
    <citation type="journal article" date="2011" name="Sci. Signal.">
        <title>System-wide temporal characterization of the proteome and phosphoproteome of human embryonic stem cell differentiation.</title>
        <authorList>
            <person name="Rigbolt K.T."/>
            <person name="Prokhorova T.A."/>
            <person name="Akimov V."/>
            <person name="Henningsen J."/>
            <person name="Johansen P.T."/>
            <person name="Kratchmarova I."/>
            <person name="Kassem M."/>
            <person name="Mann M."/>
            <person name="Olsen J.V."/>
            <person name="Blagoev B."/>
        </authorList>
    </citation>
    <scope>PHOSPHORYLATION [LARGE SCALE ANALYSIS] AT SER-193</scope>
    <scope>IDENTIFICATION BY MASS SPECTROMETRY [LARGE SCALE ANALYSIS]</scope>
</reference>
<reference key="15">
    <citation type="journal article" date="2012" name="Mol. Cell. Proteomics">
        <title>Comparative large-scale characterisation of plant vs. mammal proteins reveals similar and idiosyncratic N-alpha acetylation features.</title>
        <authorList>
            <person name="Bienvenut W.V."/>
            <person name="Sumpton D."/>
            <person name="Martinez A."/>
            <person name="Lilla S."/>
            <person name="Espagne C."/>
            <person name="Meinnel T."/>
            <person name="Giglione C."/>
        </authorList>
    </citation>
    <scope>ACETYLATION [LARGE SCALE ANALYSIS] AT ALA-2</scope>
    <scope>CLEAVAGE OF INITIATOR METHIONINE [LARGE SCALE ANALYSIS]</scope>
    <scope>IDENTIFICATION BY MASS SPECTROMETRY [LARGE SCALE ANALYSIS]</scope>
</reference>
<reference key="16">
    <citation type="journal article" date="2012" name="Proc. Natl. Acad. Sci. U.S.A.">
        <title>N-terminal acetylome analyses and functional insights of the N-terminal acetyltransferase NatB.</title>
        <authorList>
            <person name="Van Damme P."/>
            <person name="Lasa M."/>
            <person name="Polevoda B."/>
            <person name="Gazquez C."/>
            <person name="Elosegui-Artola A."/>
            <person name="Kim D.S."/>
            <person name="De Juan-Pardo E."/>
            <person name="Demeyer K."/>
            <person name="Hole K."/>
            <person name="Larrea E."/>
            <person name="Timmerman E."/>
            <person name="Prieto J."/>
            <person name="Arnesen T."/>
            <person name="Sherman F."/>
            <person name="Gevaert K."/>
            <person name="Aldabe R."/>
        </authorList>
    </citation>
    <scope>ACETYLATION [LARGE SCALE ANALYSIS] AT ALA-2</scope>
    <scope>CLEAVAGE OF INITIATOR METHIONINE [LARGE SCALE ANALYSIS]</scope>
    <scope>IDENTIFICATION BY MASS SPECTROMETRY [LARGE SCALE ANALYSIS]</scope>
</reference>
<reference key="17">
    <citation type="journal article" date="2013" name="J. Proteome Res.">
        <title>Toward a comprehensive characterization of a human cancer cell phosphoproteome.</title>
        <authorList>
            <person name="Zhou H."/>
            <person name="Di Palma S."/>
            <person name="Preisinger C."/>
            <person name="Peng M."/>
            <person name="Polat A.N."/>
            <person name="Heck A.J."/>
            <person name="Mohammed S."/>
        </authorList>
    </citation>
    <scope>PHOSPHORYLATION [LARGE SCALE ANALYSIS] AT SER-193</scope>
    <scope>IDENTIFICATION BY MASS SPECTROMETRY [LARGE SCALE ANALYSIS]</scope>
    <source>
        <tissue>Cervix carcinoma</tissue>
        <tissue>Erythroleukemia</tissue>
    </source>
</reference>
<reference key="18">
    <citation type="journal article" date="2016" name="PLoS ONE">
        <title>Production and Characterization of Monoclonal Antibodies against Human Nuclear Protein FAM76B.</title>
        <authorList>
            <person name="Zheng X."/>
            <person name="Li Y."/>
            <person name="Zhao J."/>
            <person name="Wang D."/>
            <person name="Xia H."/>
            <person name="Mao Q."/>
        </authorList>
    </citation>
    <scope>SUBCELLULAR LOCATION</scope>
</reference>
<reference key="19">
    <citation type="journal article" date="2023" name="Elife">
        <title>FAM76B regulates NF-kappaB-mediated inflammatory pathway by influencing the translocation of hnRNPA2B1.</title>
        <authorList>
            <person name="Wang D."/>
            <person name="Zheng X."/>
            <person name="Chai L."/>
            <person name="Zhao J."/>
            <person name="Zhu J."/>
            <person name="Li Y."/>
            <person name="Yang P."/>
            <person name="Mao Q."/>
            <person name="Xia H."/>
        </authorList>
    </citation>
    <scope>FUNCTION</scope>
    <scope>INTERACTION WITH HNRNPA2B1</scope>
</reference>
<reference key="20">
    <citation type="journal article" date="2024" name="Cell. Mol. Life Sci.">
        <title>FAM76B regulates PI3K/Akt/NF-kappaB-mediated M1 macrophage polarization by influencing the stability of PIK3CD mRNA.</title>
        <authorList>
            <person name="Wang J."/>
            <person name="Zhao X."/>
            <person name="Wang Q."/>
            <person name="Zheng X."/>
            <person name="Simayi D."/>
            <person name="Zhao J."/>
            <person name="Yang P."/>
            <person name="Mao Q."/>
            <person name="Xia H."/>
        </authorList>
    </citation>
    <scope>FUNCTION</scope>
</reference>
<feature type="initiator methionine" description="Removed" evidence="14 18 19">
    <location>
        <position position="1"/>
    </location>
</feature>
<feature type="chain" id="PRO_0000245763" description="Protein FAM76B">
    <location>
        <begin position="2"/>
        <end position="339"/>
    </location>
</feature>
<feature type="region of interest" description="Disordered" evidence="3">
    <location>
        <begin position="144"/>
        <end position="243"/>
    </location>
</feature>
<feature type="coiled-coil region" evidence="2">
    <location>
        <begin position="248"/>
        <end position="328"/>
    </location>
</feature>
<feature type="compositionally biased region" description="Low complexity" evidence="3">
    <location>
        <begin position="148"/>
        <end position="160"/>
    </location>
</feature>
<feature type="compositionally biased region" description="Basic residues" evidence="3">
    <location>
        <begin position="167"/>
        <end position="189"/>
    </location>
</feature>
<feature type="compositionally biased region" description="Basic and acidic residues" evidence="3">
    <location>
        <begin position="215"/>
        <end position="224"/>
    </location>
</feature>
<feature type="compositionally biased region" description="Polar residues" evidence="3">
    <location>
        <begin position="228"/>
        <end position="243"/>
    </location>
</feature>
<feature type="modified residue" description="N-acetylalanine" evidence="14 18 19">
    <location>
        <position position="2"/>
    </location>
</feature>
<feature type="modified residue" description="Phosphoserine" evidence="12">
    <location>
        <position position="22"/>
    </location>
</feature>
<feature type="modified residue" description="Phosphoserine" evidence="16">
    <location>
        <position position="148"/>
    </location>
</feature>
<feature type="modified residue" description="Phosphoserine" evidence="11 13 15 16 17 20">
    <location>
        <position position="193"/>
    </location>
</feature>
<feature type="modified residue" description="Phosphothreonine" evidence="1">
    <location>
        <position position="215"/>
    </location>
</feature>
<feature type="splice variant" id="VSP_057354" description="In isoform 3." evidence="8">
    <original>SSSINQSADSGGTDNFVLISQLKEEVMSLKRLLQQRDQTILEKDKKLTELKADFQYQESNLRTKMNSMEKAHKETVEQLQAKNRELLKQVAALSKGKKFDKSGSILTSP</original>
    <variation>RCM</variation>
    <location>
        <begin position="231"/>
        <end position="339"/>
    </location>
</feature>
<feature type="splice variant" id="VSP_022679" description="In isoform 2." evidence="9">
    <original>SSS</original>
    <variation>RSM</variation>
    <location>
        <begin position="231"/>
        <end position="233"/>
    </location>
</feature>
<feature type="splice variant" id="VSP_022680" description="In isoform 2." evidence="9">
    <location>
        <begin position="234"/>
        <end position="339"/>
    </location>
</feature>
<feature type="sequence conflict" description="In Ref. 2; CAI46088." evidence="10" ref="2">
    <original>N</original>
    <variation>K</variation>
    <location>
        <position position="228"/>
    </location>
</feature>
<feature type="sequence conflict" description="In Ref. 2; CAI46088." evidence="10" ref="2">
    <original>K</original>
    <variation>E</variation>
    <location>
        <position position="328"/>
    </location>
</feature>
<feature type="sequence conflict" description="In Ref. 2; CAI46088." evidence="10" ref="2">
    <original>G</original>
    <variation>R</variation>
    <location>
        <position position="333"/>
    </location>
</feature>
<feature type="sequence conflict" description="In Ref. 3; AAH26013." evidence="10" ref="3">
    <original>S</original>
    <variation>C</variation>
    <location sequence="Q5HYJ3-2">
        <position position="232"/>
    </location>
</feature>
<dbReference type="EMBL" id="AK313727">
    <property type="protein sequence ID" value="BAG36469.1"/>
    <property type="molecule type" value="mRNA"/>
</dbReference>
<dbReference type="EMBL" id="BX647586">
    <property type="protein sequence ID" value="CAI46088.1"/>
    <property type="molecule type" value="mRNA"/>
</dbReference>
<dbReference type="EMBL" id="AP001877">
    <property type="status" value="NOT_ANNOTATED_CDS"/>
    <property type="molecule type" value="Genomic_DNA"/>
</dbReference>
<dbReference type="EMBL" id="CH471065">
    <property type="protein sequence ID" value="EAW66962.1"/>
    <property type="molecule type" value="Genomic_DNA"/>
</dbReference>
<dbReference type="EMBL" id="CH471065">
    <property type="protein sequence ID" value="EAW66963.1"/>
    <property type="molecule type" value="Genomic_DNA"/>
</dbReference>
<dbReference type="EMBL" id="BC026013">
    <property type="protein sequence ID" value="AAH26013.1"/>
    <property type="molecule type" value="mRNA"/>
</dbReference>
<dbReference type="EMBL" id="BC028727">
    <property type="protein sequence ID" value="AAH28727.1"/>
    <property type="molecule type" value="mRNA"/>
</dbReference>
<dbReference type="CCDS" id="CCDS41700.1">
    <molecule id="Q5HYJ3-1"/>
</dbReference>
<dbReference type="RefSeq" id="NP_653265.3">
    <molecule id="Q5HYJ3-1"/>
    <property type="nucleotide sequence ID" value="NM_144664.4"/>
</dbReference>
<dbReference type="RefSeq" id="XP_047282368.1">
    <molecule id="Q5HYJ3-3"/>
    <property type="nucleotide sequence ID" value="XM_047426412.1"/>
</dbReference>
<dbReference type="RefSeq" id="XP_047282369.1">
    <molecule id="Q5HYJ3-3"/>
    <property type="nucleotide sequence ID" value="XM_047426413.1"/>
</dbReference>
<dbReference type="RefSeq" id="XP_054223726.1">
    <molecule id="Q5HYJ3-3"/>
    <property type="nucleotide sequence ID" value="XM_054367751.1"/>
</dbReference>
<dbReference type="RefSeq" id="XP_054223727.1">
    <molecule id="Q5HYJ3-3"/>
    <property type="nucleotide sequence ID" value="XM_054367752.1"/>
</dbReference>
<dbReference type="SMR" id="Q5HYJ3"/>
<dbReference type="BioGRID" id="126816">
    <property type="interactions" value="98"/>
</dbReference>
<dbReference type="FunCoup" id="Q5HYJ3">
    <property type="interactions" value="2277"/>
</dbReference>
<dbReference type="IntAct" id="Q5HYJ3">
    <property type="interactions" value="38"/>
</dbReference>
<dbReference type="MINT" id="Q5HYJ3"/>
<dbReference type="STRING" id="9606.ENSP00000351631"/>
<dbReference type="GlyGen" id="Q5HYJ3">
    <property type="glycosylation" value="1 site, 1 O-linked glycan (1 site)"/>
</dbReference>
<dbReference type="iPTMnet" id="Q5HYJ3"/>
<dbReference type="PhosphoSitePlus" id="Q5HYJ3"/>
<dbReference type="BioMuta" id="FAM76B"/>
<dbReference type="DMDM" id="296439347"/>
<dbReference type="jPOST" id="Q5HYJ3"/>
<dbReference type="MassIVE" id="Q5HYJ3"/>
<dbReference type="PaxDb" id="9606-ENSP00000351631"/>
<dbReference type="PeptideAtlas" id="Q5HYJ3"/>
<dbReference type="ProteomicsDB" id="3416"/>
<dbReference type="ProteomicsDB" id="62940">
    <molecule id="Q5HYJ3-1"/>
</dbReference>
<dbReference type="ProteomicsDB" id="62941">
    <molecule id="Q5HYJ3-2"/>
</dbReference>
<dbReference type="Pumba" id="Q5HYJ3"/>
<dbReference type="Antibodypedia" id="31661">
    <property type="antibodies" value="99 antibodies from 17 providers"/>
</dbReference>
<dbReference type="DNASU" id="143684"/>
<dbReference type="Ensembl" id="ENST00000358780.10">
    <molecule id="Q5HYJ3-1"/>
    <property type="protein sequence ID" value="ENSP00000351631.5"/>
    <property type="gene ID" value="ENSG00000077458.13"/>
</dbReference>
<dbReference type="Ensembl" id="ENST00000398187.6">
    <molecule id="Q5HYJ3-3"/>
    <property type="protein sequence ID" value="ENSP00000381248.2"/>
    <property type="gene ID" value="ENSG00000077458.13"/>
</dbReference>
<dbReference type="Ensembl" id="ENST00000543641.5">
    <molecule id="Q5HYJ3-3"/>
    <property type="protein sequence ID" value="ENSP00000444087.1"/>
    <property type="gene ID" value="ENSG00000077458.13"/>
</dbReference>
<dbReference type="GeneID" id="143684"/>
<dbReference type="KEGG" id="hsa:143684"/>
<dbReference type="MANE-Select" id="ENST00000358780.10">
    <property type="protein sequence ID" value="ENSP00000351631.5"/>
    <property type="RefSeq nucleotide sequence ID" value="NM_144664.5"/>
    <property type="RefSeq protein sequence ID" value="NP_653265.3"/>
</dbReference>
<dbReference type="UCSC" id="uc001pfn.3">
    <molecule id="Q5HYJ3-1"/>
    <property type="organism name" value="human"/>
</dbReference>
<dbReference type="AGR" id="HGNC:28492"/>
<dbReference type="CTD" id="143684"/>
<dbReference type="GeneCards" id="FAM76B"/>
<dbReference type="HGNC" id="HGNC:28492">
    <property type="gene designation" value="FAM76B"/>
</dbReference>
<dbReference type="HPA" id="ENSG00000077458">
    <property type="expression patterns" value="Tissue enhanced (bone)"/>
</dbReference>
<dbReference type="neXtProt" id="NX_Q5HYJ3"/>
<dbReference type="OpenTargets" id="ENSG00000077458"/>
<dbReference type="PharmGKB" id="PA142671838"/>
<dbReference type="VEuPathDB" id="HostDB:ENSG00000077458"/>
<dbReference type="eggNOG" id="KOG3990">
    <property type="taxonomic scope" value="Eukaryota"/>
</dbReference>
<dbReference type="GeneTree" id="ENSGT00940000159074"/>
<dbReference type="HOGENOM" id="CLU_029220_1_0_1"/>
<dbReference type="InParanoid" id="Q5HYJ3"/>
<dbReference type="OMA" id="CACAYKR"/>
<dbReference type="OrthoDB" id="3689at2759"/>
<dbReference type="PAN-GO" id="Q5HYJ3">
    <property type="GO annotations" value="1 GO annotation based on evolutionary models"/>
</dbReference>
<dbReference type="PhylomeDB" id="Q5HYJ3"/>
<dbReference type="TreeFam" id="TF313644"/>
<dbReference type="PathwayCommons" id="Q5HYJ3"/>
<dbReference type="SignaLink" id="Q5HYJ3"/>
<dbReference type="BioGRID-ORCS" id="143684">
    <property type="hits" value="18 hits in 1159 CRISPR screens"/>
</dbReference>
<dbReference type="CD-CODE" id="804901D1">
    <property type="entry name" value="Nuclear speckle"/>
</dbReference>
<dbReference type="GeneWiki" id="FAM76B"/>
<dbReference type="GenomeRNAi" id="143684"/>
<dbReference type="Pharos" id="Q5HYJ3">
    <property type="development level" value="Tdark"/>
</dbReference>
<dbReference type="PRO" id="PR:Q5HYJ3"/>
<dbReference type="Proteomes" id="UP000005640">
    <property type="component" value="Chromosome 11"/>
</dbReference>
<dbReference type="RNAct" id="Q5HYJ3">
    <property type="molecule type" value="protein"/>
</dbReference>
<dbReference type="Bgee" id="ENSG00000077458">
    <property type="expression patterns" value="Expressed in sperm and 176 other cell types or tissues"/>
</dbReference>
<dbReference type="ExpressionAtlas" id="Q5HYJ3">
    <property type="expression patterns" value="baseline and differential"/>
</dbReference>
<dbReference type="GO" id="GO:0016607">
    <property type="term" value="C:nuclear speck"/>
    <property type="evidence" value="ECO:0000314"/>
    <property type="project" value="UniProtKB"/>
</dbReference>
<dbReference type="GO" id="GO:0003723">
    <property type="term" value="F:RNA binding"/>
    <property type="evidence" value="ECO:0007669"/>
    <property type="project" value="UniProtKB-KW"/>
</dbReference>
<dbReference type="GO" id="GO:0048255">
    <property type="term" value="P:mRNA stabilization"/>
    <property type="evidence" value="ECO:0000315"/>
    <property type="project" value="UniProtKB"/>
</dbReference>
<dbReference type="GO" id="GO:0050728">
    <property type="term" value="P:negative regulation of inflammatory response"/>
    <property type="evidence" value="ECO:0000315"/>
    <property type="project" value="UniProtKB"/>
</dbReference>
<dbReference type="GO" id="GO:0043031">
    <property type="term" value="P:negative regulation of macrophage activation"/>
    <property type="evidence" value="ECO:0000315"/>
    <property type="project" value="UniProtKB"/>
</dbReference>
<dbReference type="GO" id="GO:0046826">
    <property type="term" value="P:negative regulation of protein export from nucleus"/>
    <property type="evidence" value="ECO:0000315"/>
    <property type="project" value="UniProtKB"/>
</dbReference>
<dbReference type="InterPro" id="IPR032017">
    <property type="entry name" value="FAM76"/>
</dbReference>
<dbReference type="PANTHER" id="PTHR46176">
    <property type="entry name" value="LD21662P"/>
    <property type="match status" value="1"/>
</dbReference>
<dbReference type="PANTHER" id="PTHR46176:SF3">
    <property type="entry name" value="PROTEIN FAM76B"/>
    <property type="match status" value="1"/>
</dbReference>
<dbReference type="Pfam" id="PF16046">
    <property type="entry name" value="FAM76"/>
    <property type="match status" value="1"/>
</dbReference>